<dbReference type="EC" id="7.4.2.8" evidence="1"/>
<dbReference type="EMBL" id="AE014075">
    <property type="protein sequence ID" value="AAN78614.1"/>
    <property type="molecule type" value="Genomic_DNA"/>
</dbReference>
<dbReference type="PIR" id="F85492">
    <property type="entry name" value="F85492"/>
</dbReference>
<dbReference type="PIR" id="F90641">
    <property type="entry name" value="F90641"/>
</dbReference>
<dbReference type="RefSeq" id="WP_000905780.1">
    <property type="nucleotide sequence ID" value="NZ_CP051263.1"/>
</dbReference>
<dbReference type="SMR" id="Q8FL61"/>
<dbReference type="STRING" id="199310.c0116"/>
<dbReference type="KEGG" id="ecc:c0116"/>
<dbReference type="eggNOG" id="COG0653">
    <property type="taxonomic scope" value="Bacteria"/>
</dbReference>
<dbReference type="HOGENOM" id="CLU_005314_3_0_6"/>
<dbReference type="BioCyc" id="ECOL199310:C0116-MONOMER"/>
<dbReference type="Proteomes" id="UP000001410">
    <property type="component" value="Chromosome"/>
</dbReference>
<dbReference type="GO" id="GO:0031522">
    <property type="term" value="C:cell envelope Sec protein transport complex"/>
    <property type="evidence" value="ECO:0007669"/>
    <property type="project" value="TreeGrafter"/>
</dbReference>
<dbReference type="GO" id="GO:0005829">
    <property type="term" value="C:cytosol"/>
    <property type="evidence" value="ECO:0007669"/>
    <property type="project" value="TreeGrafter"/>
</dbReference>
<dbReference type="GO" id="GO:0005886">
    <property type="term" value="C:plasma membrane"/>
    <property type="evidence" value="ECO:0007669"/>
    <property type="project" value="UniProtKB-SubCell"/>
</dbReference>
<dbReference type="GO" id="GO:0005524">
    <property type="term" value="F:ATP binding"/>
    <property type="evidence" value="ECO:0007669"/>
    <property type="project" value="UniProtKB-UniRule"/>
</dbReference>
<dbReference type="GO" id="GO:0046872">
    <property type="term" value="F:metal ion binding"/>
    <property type="evidence" value="ECO:0007669"/>
    <property type="project" value="UniProtKB-KW"/>
</dbReference>
<dbReference type="GO" id="GO:0008564">
    <property type="term" value="F:protein-exporting ATPase activity"/>
    <property type="evidence" value="ECO:0007669"/>
    <property type="project" value="UniProtKB-EC"/>
</dbReference>
<dbReference type="GO" id="GO:0065002">
    <property type="term" value="P:intracellular protein transmembrane transport"/>
    <property type="evidence" value="ECO:0007669"/>
    <property type="project" value="UniProtKB-UniRule"/>
</dbReference>
<dbReference type="GO" id="GO:0017038">
    <property type="term" value="P:protein import"/>
    <property type="evidence" value="ECO:0007669"/>
    <property type="project" value="InterPro"/>
</dbReference>
<dbReference type="GO" id="GO:0006605">
    <property type="term" value="P:protein targeting"/>
    <property type="evidence" value="ECO:0007669"/>
    <property type="project" value="UniProtKB-UniRule"/>
</dbReference>
<dbReference type="GO" id="GO:0043952">
    <property type="term" value="P:protein transport by the Sec complex"/>
    <property type="evidence" value="ECO:0007669"/>
    <property type="project" value="TreeGrafter"/>
</dbReference>
<dbReference type="CDD" id="cd17928">
    <property type="entry name" value="DEXDc_SecA"/>
    <property type="match status" value="1"/>
</dbReference>
<dbReference type="CDD" id="cd18803">
    <property type="entry name" value="SF2_C_secA"/>
    <property type="match status" value="1"/>
</dbReference>
<dbReference type="FunFam" id="1.10.3060.10:FF:000001">
    <property type="entry name" value="Preprotein translocase subunit SecA"/>
    <property type="match status" value="1"/>
</dbReference>
<dbReference type="FunFam" id="3.40.50.300:FF:000081">
    <property type="entry name" value="Preprotein translocase subunit SecA"/>
    <property type="match status" value="1"/>
</dbReference>
<dbReference type="FunFam" id="3.40.50.300:FF:000113">
    <property type="entry name" value="Preprotein translocase subunit SecA"/>
    <property type="match status" value="1"/>
</dbReference>
<dbReference type="FunFam" id="3.90.1440.10:FF:000001">
    <property type="entry name" value="Preprotein translocase subunit SecA"/>
    <property type="match status" value="1"/>
</dbReference>
<dbReference type="Gene3D" id="1.10.3060.10">
    <property type="entry name" value="Helical scaffold and wing domains of SecA"/>
    <property type="match status" value="1"/>
</dbReference>
<dbReference type="Gene3D" id="3.40.50.300">
    <property type="entry name" value="P-loop containing nucleotide triphosphate hydrolases"/>
    <property type="match status" value="2"/>
</dbReference>
<dbReference type="Gene3D" id="3.90.1440.10">
    <property type="entry name" value="SecA, preprotein cross-linking domain"/>
    <property type="match status" value="1"/>
</dbReference>
<dbReference type="HAMAP" id="MF_01382">
    <property type="entry name" value="SecA"/>
    <property type="match status" value="1"/>
</dbReference>
<dbReference type="InterPro" id="IPR014001">
    <property type="entry name" value="Helicase_ATP-bd"/>
</dbReference>
<dbReference type="InterPro" id="IPR001650">
    <property type="entry name" value="Helicase_C-like"/>
</dbReference>
<dbReference type="InterPro" id="IPR027417">
    <property type="entry name" value="P-loop_NTPase"/>
</dbReference>
<dbReference type="InterPro" id="IPR004027">
    <property type="entry name" value="SEC_C_motif"/>
</dbReference>
<dbReference type="InterPro" id="IPR000185">
    <property type="entry name" value="SecA"/>
</dbReference>
<dbReference type="InterPro" id="IPR020937">
    <property type="entry name" value="SecA_CS"/>
</dbReference>
<dbReference type="InterPro" id="IPR011115">
    <property type="entry name" value="SecA_DEAD"/>
</dbReference>
<dbReference type="InterPro" id="IPR014018">
    <property type="entry name" value="SecA_motor_DEAD"/>
</dbReference>
<dbReference type="InterPro" id="IPR011130">
    <property type="entry name" value="SecA_preprotein_X-link_dom"/>
</dbReference>
<dbReference type="InterPro" id="IPR044722">
    <property type="entry name" value="SecA_SF2_C"/>
</dbReference>
<dbReference type="InterPro" id="IPR011116">
    <property type="entry name" value="SecA_Wing/Scaffold"/>
</dbReference>
<dbReference type="InterPro" id="IPR036266">
    <property type="entry name" value="SecA_Wing/Scaffold_sf"/>
</dbReference>
<dbReference type="InterPro" id="IPR036670">
    <property type="entry name" value="SecA_X-link_sf"/>
</dbReference>
<dbReference type="NCBIfam" id="NF009538">
    <property type="entry name" value="PRK12904.1"/>
    <property type="match status" value="1"/>
</dbReference>
<dbReference type="NCBIfam" id="TIGR00963">
    <property type="entry name" value="secA"/>
    <property type="match status" value="1"/>
</dbReference>
<dbReference type="PANTHER" id="PTHR30612:SF0">
    <property type="entry name" value="CHLOROPLAST PROTEIN-TRANSPORTING ATPASE"/>
    <property type="match status" value="1"/>
</dbReference>
<dbReference type="PANTHER" id="PTHR30612">
    <property type="entry name" value="SECA INNER MEMBRANE COMPONENT OF SEC PROTEIN SECRETION SYSTEM"/>
    <property type="match status" value="1"/>
</dbReference>
<dbReference type="Pfam" id="PF21090">
    <property type="entry name" value="P-loop_SecA"/>
    <property type="match status" value="1"/>
</dbReference>
<dbReference type="Pfam" id="PF02810">
    <property type="entry name" value="SEC-C"/>
    <property type="match status" value="1"/>
</dbReference>
<dbReference type="Pfam" id="PF07517">
    <property type="entry name" value="SecA_DEAD"/>
    <property type="match status" value="1"/>
</dbReference>
<dbReference type="Pfam" id="PF01043">
    <property type="entry name" value="SecA_PP_bind"/>
    <property type="match status" value="1"/>
</dbReference>
<dbReference type="Pfam" id="PF07516">
    <property type="entry name" value="SecA_SW"/>
    <property type="match status" value="1"/>
</dbReference>
<dbReference type="PRINTS" id="PR00906">
    <property type="entry name" value="SECA"/>
</dbReference>
<dbReference type="SMART" id="SM00957">
    <property type="entry name" value="SecA_DEAD"/>
    <property type="match status" value="1"/>
</dbReference>
<dbReference type="SMART" id="SM00958">
    <property type="entry name" value="SecA_PP_bind"/>
    <property type="match status" value="1"/>
</dbReference>
<dbReference type="SUPFAM" id="SSF81886">
    <property type="entry name" value="Helical scaffold and wing domains of SecA"/>
    <property type="match status" value="1"/>
</dbReference>
<dbReference type="SUPFAM" id="SSF52540">
    <property type="entry name" value="P-loop containing nucleoside triphosphate hydrolases"/>
    <property type="match status" value="2"/>
</dbReference>
<dbReference type="SUPFAM" id="SSF81767">
    <property type="entry name" value="Pre-protein crosslinking domain of SecA"/>
    <property type="match status" value="1"/>
</dbReference>
<dbReference type="PROSITE" id="PS01312">
    <property type="entry name" value="SECA"/>
    <property type="match status" value="1"/>
</dbReference>
<dbReference type="PROSITE" id="PS51196">
    <property type="entry name" value="SECA_MOTOR_DEAD"/>
    <property type="match status" value="1"/>
</dbReference>
<reference key="1">
    <citation type="journal article" date="2002" name="Proc. Natl. Acad. Sci. U.S.A.">
        <title>Extensive mosaic structure revealed by the complete genome sequence of uropathogenic Escherichia coli.</title>
        <authorList>
            <person name="Welch R.A."/>
            <person name="Burland V."/>
            <person name="Plunkett G. III"/>
            <person name="Redford P."/>
            <person name="Roesch P."/>
            <person name="Rasko D."/>
            <person name="Buckles E.L."/>
            <person name="Liou S.-R."/>
            <person name="Boutin A."/>
            <person name="Hackett J."/>
            <person name="Stroud D."/>
            <person name="Mayhew G.F."/>
            <person name="Rose D.J."/>
            <person name="Zhou S."/>
            <person name="Schwartz D.C."/>
            <person name="Perna N.T."/>
            <person name="Mobley H.L.T."/>
            <person name="Donnenberg M.S."/>
            <person name="Blattner F.R."/>
        </authorList>
    </citation>
    <scope>NUCLEOTIDE SEQUENCE [LARGE SCALE GENOMIC DNA]</scope>
    <source>
        <strain>CFT073 / ATCC 700928 / UPEC</strain>
    </source>
</reference>
<feature type="chain" id="PRO_0000320808" description="Protein translocase subunit SecA">
    <location>
        <begin position="1"/>
        <end position="901"/>
    </location>
</feature>
<feature type="region of interest" description="Disordered" evidence="2">
    <location>
        <begin position="859"/>
        <end position="901"/>
    </location>
</feature>
<feature type="compositionally biased region" description="Basic residues" evidence="2">
    <location>
        <begin position="891"/>
        <end position="901"/>
    </location>
</feature>
<feature type="binding site" evidence="1">
    <location>
        <position position="87"/>
    </location>
    <ligand>
        <name>ATP</name>
        <dbReference type="ChEBI" id="CHEBI:30616"/>
    </ligand>
</feature>
<feature type="binding site" evidence="1">
    <location>
        <begin position="105"/>
        <end position="109"/>
    </location>
    <ligand>
        <name>ATP</name>
        <dbReference type="ChEBI" id="CHEBI:30616"/>
    </ligand>
</feature>
<feature type="binding site" evidence="1">
    <location>
        <position position="512"/>
    </location>
    <ligand>
        <name>ATP</name>
        <dbReference type="ChEBI" id="CHEBI:30616"/>
    </ligand>
</feature>
<feature type="binding site" evidence="1">
    <location>
        <position position="885"/>
    </location>
    <ligand>
        <name>Zn(2+)</name>
        <dbReference type="ChEBI" id="CHEBI:29105"/>
    </ligand>
</feature>
<feature type="binding site" evidence="1">
    <location>
        <position position="887"/>
    </location>
    <ligand>
        <name>Zn(2+)</name>
        <dbReference type="ChEBI" id="CHEBI:29105"/>
    </ligand>
</feature>
<feature type="binding site" evidence="1">
    <location>
        <position position="896"/>
    </location>
    <ligand>
        <name>Zn(2+)</name>
        <dbReference type="ChEBI" id="CHEBI:29105"/>
    </ligand>
</feature>
<feature type="binding site" evidence="1">
    <location>
        <position position="897"/>
    </location>
    <ligand>
        <name>Zn(2+)</name>
        <dbReference type="ChEBI" id="CHEBI:29105"/>
    </ligand>
</feature>
<name>SECA_ECOL6</name>
<evidence type="ECO:0000255" key="1">
    <source>
        <dbReference type="HAMAP-Rule" id="MF_01382"/>
    </source>
</evidence>
<evidence type="ECO:0000256" key="2">
    <source>
        <dbReference type="SAM" id="MobiDB-lite"/>
    </source>
</evidence>
<gene>
    <name evidence="1" type="primary">secA</name>
    <name type="ordered locus">c0116</name>
</gene>
<keyword id="KW-0067">ATP-binding</keyword>
<keyword id="KW-0997">Cell inner membrane</keyword>
<keyword id="KW-1003">Cell membrane</keyword>
<keyword id="KW-0963">Cytoplasm</keyword>
<keyword id="KW-0472">Membrane</keyword>
<keyword id="KW-0479">Metal-binding</keyword>
<keyword id="KW-0547">Nucleotide-binding</keyword>
<keyword id="KW-0653">Protein transport</keyword>
<keyword id="KW-1185">Reference proteome</keyword>
<keyword id="KW-1278">Translocase</keyword>
<keyword id="KW-0811">Translocation</keyword>
<keyword id="KW-0813">Transport</keyword>
<keyword id="KW-0862">Zinc</keyword>
<organism>
    <name type="scientific">Escherichia coli O6:H1 (strain CFT073 / ATCC 700928 / UPEC)</name>
    <dbReference type="NCBI Taxonomy" id="199310"/>
    <lineage>
        <taxon>Bacteria</taxon>
        <taxon>Pseudomonadati</taxon>
        <taxon>Pseudomonadota</taxon>
        <taxon>Gammaproteobacteria</taxon>
        <taxon>Enterobacterales</taxon>
        <taxon>Enterobacteriaceae</taxon>
        <taxon>Escherichia</taxon>
    </lineage>
</organism>
<protein>
    <recommendedName>
        <fullName evidence="1">Protein translocase subunit SecA</fullName>
        <ecNumber evidence="1">7.4.2.8</ecNumber>
    </recommendedName>
</protein>
<sequence length="901" mass="101965">MLIKLLTKVFGSRNDRTLRRMRKVVNIINAMEPEMEKLSDEELKGKTAEFRARLEKGEVLENLIPEAFAVVREASKRVFGMRHFDVQLLGGMVLNERCIAEMRTGEGKTLTATLPAYLNALTGKGVHVVTVNDYLAQRDAENNRPLFEFLGLTVGINLPGMPAPAKREAYAADITYGTNNEYGFDYLRDNMAFSPEERVQRKLHYALVDEVDSILIDEARTPLIISGPAEDSSEMYKRVNKIIPHLIRQEKEDSETFQGEGHFSVDEKSRQVNLTERGLVLIEELLVKEGIMDEGESLYSPANIMLMHHVTAALRAHALFTRDVDYIVKDGEVIIVDEHTGRTMQGRRWSDGLHQAVEAKEGVQIQNENQTLASITFQNYFRLYEKLAGMTGTADTEAFEFSSIYKLDTVVVPTNRPMIRKDLPDLVYMTEAEKIQAIIEDIKERTAKGQPVLVGTISIEKSELVSNELTKAGIKHNVLNAKFHANEAAIVAQAGYPAAVTIATNMAGRGTDIVLGGSWQAEVAALENPTAEQIEKIKADWQVRHDAVLAAGGLHIIGTERHESRRIDNQLRGRSGRQGDAGSSRFYLSMEDALMRIFASDRVSGMMRKLGMKPGEAIEHPWVTKAIANAQRKVESRNFDIRKQLLEYDDVANDQRRAIYSQRNELLDVSDVSETINSIREDVFKATIDAYIPPQSLEEMWDIPGLQERLKNDFDLDLPIAEWLDKEPELHEETLRERILAQSIEVYQRKEEVVGAEMMRHFEKGVMLQTLDSLWKEHLAAMDYLRQGIHLRGYAQKDPKQEYKRESFSMFAAMLESLKYEVISTLSKVQVRMPEEVEELEQQRRMEAERLAQMQQLSHQDDDSAAAAALAAQTGERKVGRNDPCPCGSGKKYKQCHGRLQ</sequence>
<proteinExistence type="inferred from homology"/>
<comment type="function">
    <text evidence="1">Part of the Sec protein translocase complex. Interacts with the SecYEG preprotein conducting channel. Has a central role in coupling the hydrolysis of ATP to the transfer of proteins into and across the cell membrane, serving both as a receptor for the preprotein-SecB complex and as an ATP-driven molecular motor driving the stepwise translocation of polypeptide chains across the membrane.</text>
</comment>
<comment type="catalytic activity">
    <reaction evidence="1">
        <text>ATP + H2O + cellular proteinSide 1 = ADP + phosphate + cellular proteinSide 2.</text>
        <dbReference type="EC" id="7.4.2.8"/>
    </reaction>
</comment>
<comment type="cofactor">
    <cofactor evidence="1">
        <name>Zn(2+)</name>
        <dbReference type="ChEBI" id="CHEBI:29105"/>
    </cofactor>
    <text evidence="1">May bind 1 zinc ion per subunit.</text>
</comment>
<comment type="subunit">
    <text evidence="1">Monomer and homodimer. Part of the essential Sec protein translocation apparatus which comprises SecA, SecYEG and auxiliary proteins SecDF-YajC and YidC.</text>
</comment>
<comment type="subcellular location">
    <subcellularLocation>
        <location evidence="1">Cell inner membrane</location>
        <topology evidence="1">Peripheral membrane protein</topology>
        <orientation evidence="1">Cytoplasmic side</orientation>
    </subcellularLocation>
    <subcellularLocation>
        <location evidence="1">Cytoplasm</location>
    </subcellularLocation>
    <text evidence="1">Distribution is 50-50.</text>
</comment>
<comment type="induction">
    <text evidence="1">Repressed under conditions of excess protein secretion capacity and derepressed when protein secretion becomes limiting. This is regulated by SecM.</text>
</comment>
<comment type="similarity">
    <text evidence="1">Belongs to the SecA family.</text>
</comment>
<accession>Q8FL61</accession>